<organism>
    <name type="scientific">Borreliella burgdorferi (strain ZS7)</name>
    <name type="common">Borrelia burgdorferi</name>
    <dbReference type="NCBI Taxonomy" id="445985"/>
    <lineage>
        <taxon>Bacteria</taxon>
        <taxon>Pseudomonadati</taxon>
        <taxon>Spirochaetota</taxon>
        <taxon>Spirochaetia</taxon>
        <taxon>Spirochaetales</taxon>
        <taxon>Borreliaceae</taxon>
        <taxon>Borreliella</taxon>
    </lineage>
</organism>
<keyword id="KW-0067">ATP-binding</keyword>
<keyword id="KW-0133">Cell shape</keyword>
<keyword id="KW-0961">Cell wall biogenesis/degradation</keyword>
<keyword id="KW-0963">Cytoplasm</keyword>
<keyword id="KW-0436">Ligase</keyword>
<keyword id="KW-0460">Magnesium</keyword>
<keyword id="KW-0464">Manganese</keyword>
<keyword id="KW-0479">Metal-binding</keyword>
<keyword id="KW-0547">Nucleotide-binding</keyword>
<keyword id="KW-0573">Peptidoglycan synthesis</keyword>
<evidence type="ECO:0000250" key="1"/>
<evidence type="ECO:0000255" key="2">
    <source>
        <dbReference type="HAMAP-Rule" id="MF_00047"/>
    </source>
</evidence>
<accession>B7J1D2</accession>
<reference key="1">
    <citation type="journal article" date="2011" name="J. Bacteriol.">
        <title>Whole-genome sequences of thirteen isolates of Borrelia burgdorferi.</title>
        <authorList>
            <person name="Schutzer S.E."/>
            <person name="Fraser-Liggett C.M."/>
            <person name="Casjens S.R."/>
            <person name="Qiu W.G."/>
            <person name="Dunn J.J."/>
            <person name="Mongodin E.F."/>
            <person name="Luft B.J."/>
        </authorList>
    </citation>
    <scope>NUCLEOTIDE SEQUENCE [LARGE SCALE GENOMIC DNA]</scope>
    <source>
        <strain>ZS7</strain>
    </source>
</reference>
<protein>
    <recommendedName>
        <fullName evidence="2">D-alanine--D-alanine ligase</fullName>
        <ecNumber evidence="2">6.3.2.4</ecNumber>
    </recommendedName>
    <alternativeName>
        <fullName evidence="2">D-Ala-D-Ala ligase</fullName>
    </alternativeName>
    <alternativeName>
        <fullName evidence="2">D-alanylalanine synthetase</fullName>
    </alternativeName>
</protein>
<feature type="chain" id="PRO_1000116634" description="D-alanine--D-alanine ligase">
    <location>
        <begin position="1"/>
        <end position="361"/>
    </location>
</feature>
<feature type="domain" description="ATP-grasp" evidence="2">
    <location>
        <begin position="134"/>
        <end position="344"/>
    </location>
</feature>
<feature type="binding site" evidence="2">
    <location>
        <begin position="167"/>
        <end position="222"/>
    </location>
    <ligand>
        <name>ATP</name>
        <dbReference type="ChEBI" id="CHEBI:30616"/>
    </ligand>
</feature>
<feature type="binding site" evidence="2">
    <location>
        <position position="297"/>
    </location>
    <ligand>
        <name>Mg(2+)</name>
        <dbReference type="ChEBI" id="CHEBI:18420"/>
        <label>1</label>
    </ligand>
</feature>
<feature type="binding site" evidence="2">
    <location>
        <position position="311"/>
    </location>
    <ligand>
        <name>Mg(2+)</name>
        <dbReference type="ChEBI" id="CHEBI:18420"/>
        <label>1</label>
    </ligand>
</feature>
<feature type="binding site" evidence="2">
    <location>
        <position position="311"/>
    </location>
    <ligand>
        <name>Mg(2+)</name>
        <dbReference type="ChEBI" id="CHEBI:18420"/>
        <label>2</label>
    </ligand>
</feature>
<feature type="binding site" evidence="2">
    <location>
        <position position="313"/>
    </location>
    <ligand>
        <name>Mg(2+)</name>
        <dbReference type="ChEBI" id="CHEBI:18420"/>
        <label>2</label>
    </ligand>
</feature>
<proteinExistence type="inferred from homology"/>
<dbReference type="EC" id="6.3.2.4" evidence="2"/>
<dbReference type="EMBL" id="CP001205">
    <property type="protein sequence ID" value="ACK75195.1"/>
    <property type="molecule type" value="Genomic_DNA"/>
</dbReference>
<dbReference type="RefSeq" id="WP_002657614.1">
    <property type="nucleotide sequence ID" value="NC_011728.1"/>
</dbReference>
<dbReference type="SMR" id="B7J1D2"/>
<dbReference type="GeneID" id="56567626"/>
<dbReference type="KEGG" id="bbz:BbuZS7_0201"/>
<dbReference type="HOGENOM" id="CLU_039268_0_0_12"/>
<dbReference type="UniPathway" id="UPA00219"/>
<dbReference type="Proteomes" id="UP000006901">
    <property type="component" value="Chromosome"/>
</dbReference>
<dbReference type="GO" id="GO:0005829">
    <property type="term" value="C:cytosol"/>
    <property type="evidence" value="ECO:0007669"/>
    <property type="project" value="TreeGrafter"/>
</dbReference>
<dbReference type="GO" id="GO:0005524">
    <property type="term" value="F:ATP binding"/>
    <property type="evidence" value="ECO:0007669"/>
    <property type="project" value="UniProtKB-KW"/>
</dbReference>
<dbReference type="GO" id="GO:0008716">
    <property type="term" value="F:D-alanine-D-alanine ligase activity"/>
    <property type="evidence" value="ECO:0007669"/>
    <property type="project" value="UniProtKB-UniRule"/>
</dbReference>
<dbReference type="GO" id="GO:0046872">
    <property type="term" value="F:metal ion binding"/>
    <property type="evidence" value="ECO:0007669"/>
    <property type="project" value="UniProtKB-KW"/>
</dbReference>
<dbReference type="GO" id="GO:0071555">
    <property type="term" value="P:cell wall organization"/>
    <property type="evidence" value="ECO:0007669"/>
    <property type="project" value="UniProtKB-KW"/>
</dbReference>
<dbReference type="GO" id="GO:0009252">
    <property type="term" value="P:peptidoglycan biosynthetic process"/>
    <property type="evidence" value="ECO:0007669"/>
    <property type="project" value="UniProtKB-UniRule"/>
</dbReference>
<dbReference type="GO" id="GO:0008360">
    <property type="term" value="P:regulation of cell shape"/>
    <property type="evidence" value="ECO:0007669"/>
    <property type="project" value="UniProtKB-KW"/>
</dbReference>
<dbReference type="Gene3D" id="3.40.50.20">
    <property type="match status" value="1"/>
</dbReference>
<dbReference type="Gene3D" id="3.30.1490.20">
    <property type="entry name" value="ATP-grasp fold, A domain"/>
    <property type="match status" value="1"/>
</dbReference>
<dbReference type="Gene3D" id="3.30.470.20">
    <property type="entry name" value="ATP-grasp fold, B domain"/>
    <property type="match status" value="1"/>
</dbReference>
<dbReference type="HAMAP" id="MF_00047">
    <property type="entry name" value="Dala_Dala_lig"/>
    <property type="match status" value="1"/>
</dbReference>
<dbReference type="InterPro" id="IPR011761">
    <property type="entry name" value="ATP-grasp"/>
</dbReference>
<dbReference type="InterPro" id="IPR013815">
    <property type="entry name" value="ATP_grasp_subdomain_1"/>
</dbReference>
<dbReference type="InterPro" id="IPR000291">
    <property type="entry name" value="D-Ala_lig_Van_CS"/>
</dbReference>
<dbReference type="InterPro" id="IPR005905">
    <property type="entry name" value="D_ala_D_ala"/>
</dbReference>
<dbReference type="InterPro" id="IPR011095">
    <property type="entry name" value="Dala_Dala_lig_C"/>
</dbReference>
<dbReference type="InterPro" id="IPR011127">
    <property type="entry name" value="Dala_Dala_lig_N"/>
</dbReference>
<dbReference type="InterPro" id="IPR016185">
    <property type="entry name" value="PreATP-grasp_dom_sf"/>
</dbReference>
<dbReference type="NCBIfam" id="TIGR01205">
    <property type="entry name" value="D_ala_D_alaTIGR"/>
    <property type="match status" value="1"/>
</dbReference>
<dbReference type="NCBIfam" id="NF002528">
    <property type="entry name" value="PRK01966.1-4"/>
    <property type="match status" value="1"/>
</dbReference>
<dbReference type="NCBIfam" id="NF011168">
    <property type="entry name" value="PRK14570.1"/>
    <property type="match status" value="1"/>
</dbReference>
<dbReference type="PANTHER" id="PTHR23132">
    <property type="entry name" value="D-ALANINE--D-ALANINE LIGASE"/>
    <property type="match status" value="1"/>
</dbReference>
<dbReference type="PANTHER" id="PTHR23132:SF25">
    <property type="entry name" value="D-ALANINE--D-ALANINE LIGASE A"/>
    <property type="match status" value="1"/>
</dbReference>
<dbReference type="Pfam" id="PF07478">
    <property type="entry name" value="Dala_Dala_lig_C"/>
    <property type="match status" value="1"/>
</dbReference>
<dbReference type="Pfam" id="PF01820">
    <property type="entry name" value="Dala_Dala_lig_N"/>
    <property type="match status" value="1"/>
</dbReference>
<dbReference type="PIRSF" id="PIRSF039102">
    <property type="entry name" value="Ddl/VanB"/>
    <property type="match status" value="1"/>
</dbReference>
<dbReference type="SUPFAM" id="SSF56059">
    <property type="entry name" value="Glutathione synthetase ATP-binding domain-like"/>
    <property type="match status" value="1"/>
</dbReference>
<dbReference type="SUPFAM" id="SSF52440">
    <property type="entry name" value="PreATP-grasp domain"/>
    <property type="match status" value="1"/>
</dbReference>
<dbReference type="PROSITE" id="PS50975">
    <property type="entry name" value="ATP_GRASP"/>
    <property type="match status" value="1"/>
</dbReference>
<dbReference type="PROSITE" id="PS00843">
    <property type="entry name" value="DALA_DALA_LIGASE_1"/>
    <property type="match status" value="1"/>
</dbReference>
<dbReference type="PROSITE" id="PS00844">
    <property type="entry name" value="DALA_DALA_LIGASE_2"/>
    <property type="match status" value="1"/>
</dbReference>
<comment type="function">
    <text evidence="2">Cell wall formation.</text>
</comment>
<comment type="catalytic activity">
    <reaction evidence="2">
        <text>2 D-alanine + ATP = D-alanyl-D-alanine + ADP + phosphate + H(+)</text>
        <dbReference type="Rhea" id="RHEA:11224"/>
        <dbReference type="ChEBI" id="CHEBI:15378"/>
        <dbReference type="ChEBI" id="CHEBI:30616"/>
        <dbReference type="ChEBI" id="CHEBI:43474"/>
        <dbReference type="ChEBI" id="CHEBI:57416"/>
        <dbReference type="ChEBI" id="CHEBI:57822"/>
        <dbReference type="ChEBI" id="CHEBI:456216"/>
        <dbReference type="EC" id="6.3.2.4"/>
    </reaction>
</comment>
<comment type="cofactor">
    <cofactor evidence="1">
        <name>Mg(2+)</name>
        <dbReference type="ChEBI" id="CHEBI:18420"/>
    </cofactor>
    <cofactor evidence="1">
        <name>Mn(2+)</name>
        <dbReference type="ChEBI" id="CHEBI:29035"/>
    </cofactor>
    <text evidence="1">Binds 2 magnesium or manganese ions per subunit.</text>
</comment>
<comment type="pathway">
    <text evidence="2">Cell wall biogenesis; peptidoglycan biosynthesis.</text>
</comment>
<comment type="subcellular location">
    <subcellularLocation>
        <location evidence="2">Cytoplasm</location>
    </subcellularLocation>
</comment>
<comment type="similarity">
    <text evidence="2">Belongs to the D-alanine--D-alanine ligase family.</text>
</comment>
<sequence length="361" mass="40779">MKKNLMLIFGGVSFEHEISCKSAYSIYLALLDLNKYNIYPVYIDKCTGVWYLLDSVSDPPKPINTDVLPIVSLLPGFGIFSNNKNLEIDVVFPVVHGRTGEDGAIQGVLKVMDIPCVGAGIIGSAISSNKYFCKLLLKSFDIPLVPFIGFRQHDYFLDKEEIKKNVKEVLGYPVIVKPAVLGSSIGINVAYSENQIESFIKEALKYDLTIVIEKFIEAREIECSIIGNEKMKIFSPGEVVVQDFIFYDYDAKYSVIPGNSIIFNIPAHLETNQLLSIKEYAFLAYKNLELRGMARVDFFVEKKSGTIYLNEINTIPGFTDISMFAKMCSNDGLQFKDLVDNLIDYAFQSYINRKKRIDFEN</sequence>
<gene>
    <name evidence="2" type="primary">ddl</name>
    <name type="ordered locus">BbuZS7_0201</name>
</gene>
<name>DDL_BORBZ</name>